<dbReference type="EC" id="2.7.1.33" evidence="1"/>
<dbReference type="EMBL" id="FM180568">
    <property type="protein sequence ID" value="CAS11834.1"/>
    <property type="molecule type" value="Genomic_DNA"/>
</dbReference>
<dbReference type="RefSeq" id="WP_000023081.1">
    <property type="nucleotide sequence ID" value="NC_011601.1"/>
</dbReference>
<dbReference type="SMR" id="B7UNV0"/>
<dbReference type="GeneID" id="93777919"/>
<dbReference type="KEGG" id="ecg:E2348C_4286"/>
<dbReference type="HOGENOM" id="CLU_053818_1_1_6"/>
<dbReference type="UniPathway" id="UPA00241">
    <property type="reaction ID" value="UER00352"/>
</dbReference>
<dbReference type="Proteomes" id="UP000008205">
    <property type="component" value="Chromosome"/>
</dbReference>
<dbReference type="GO" id="GO:0005737">
    <property type="term" value="C:cytoplasm"/>
    <property type="evidence" value="ECO:0007669"/>
    <property type="project" value="UniProtKB-SubCell"/>
</dbReference>
<dbReference type="GO" id="GO:0005524">
    <property type="term" value="F:ATP binding"/>
    <property type="evidence" value="ECO:0007669"/>
    <property type="project" value="UniProtKB-UniRule"/>
</dbReference>
<dbReference type="GO" id="GO:0004594">
    <property type="term" value="F:pantothenate kinase activity"/>
    <property type="evidence" value="ECO:0007669"/>
    <property type="project" value="UniProtKB-UniRule"/>
</dbReference>
<dbReference type="GO" id="GO:0015937">
    <property type="term" value="P:coenzyme A biosynthetic process"/>
    <property type="evidence" value="ECO:0007669"/>
    <property type="project" value="UniProtKB-UniRule"/>
</dbReference>
<dbReference type="CDD" id="cd02025">
    <property type="entry name" value="PanK"/>
    <property type="match status" value="1"/>
</dbReference>
<dbReference type="FunFam" id="3.40.50.300:FF:000242">
    <property type="entry name" value="Pantothenate kinase"/>
    <property type="match status" value="1"/>
</dbReference>
<dbReference type="Gene3D" id="3.40.50.300">
    <property type="entry name" value="P-loop containing nucleotide triphosphate hydrolases"/>
    <property type="match status" value="1"/>
</dbReference>
<dbReference type="HAMAP" id="MF_00215">
    <property type="entry name" value="Pantothen_kinase_1"/>
    <property type="match status" value="1"/>
</dbReference>
<dbReference type="InterPro" id="IPR027417">
    <property type="entry name" value="P-loop_NTPase"/>
</dbReference>
<dbReference type="InterPro" id="IPR004566">
    <property type="entry name" value="PanK"/>
</dbReference>
<dbReference type="InterPro" id="IPR006083">
    <property type="entry name" value="PRK/URK"/>
</dbReference>
<dbReference type="NCBIfam" id="TIGR00554">
    <property type="entry name" value="panK_bact"/>
    <property type="match status" value="1"/>
</dbReference>
<dbReference type="PANTHER" id="PTHR10285">
    <property type="entry name" value="URIDINE KINASE"/>
    <property type="match status" value="1"/>
</dbReference>
<dbReference type="Pfam" id="PF00485">
    <property type="entry name" value="PRK"/>
    <property type="match status" value="1"/>
</dbReference>
<dbReference type="PIRSF" id="PIRSF000545">
    <property type="entry name" value="Pantothenate_kin"/>
    <property type="match status" value="1"/>
</dbReference>
<dbReference type="SUPFAM" id="SSF52540">
    <property type="entry name" value="P-loop containing nucleoside triphosphate hydrolases"/>
    <property type="match status" value="1"/>
</dbReference>
<comment type="catalytic activity">
    <reaction evidence="1">
        <text>(R)-pantothenate + ATP = (R)-4'-phosphopantothenate + ADP + H(+)</text>
        <dbReference type="Rhea" id="RHEA:16373"/>
        <dbReference type="ChEBI" id="CHEBI:10986"/>
        <dbReference type="ChEBI" id="CHEBI:15378"/>
        <dbReference type="ChEBI" id="CHEBI:29032"/>
        <dbReference type="ChEBI" id="CHEBI:30616"/>
        <dbReference type="ChEBI" id="CHEBI:456216"/>
        <dbReference type="EC" id="2.7.1.33"/>
    </reaction>
</comment>
<comment type="pathway">
    <text evidence="1">Cofactor biosynthesis; coenzyme A biosynthesis; CoA from (R)-pantothenate: step 1/5.</text>
</comment>
<comment type="subcellular location">
    <subcellularLocation>
        <location evidence="1">Cytoplasm</location>
    </subcellularLocation>
</comment>
<comment type="similarity">
    <text evidence="1">Belongs to the prokaryotic pantothenate kinase family.</text>
</comment>
<proteinExistence type="inferred from homology"/>
<sequence length="316" mass="36360">MSIKEQTLMTPYLQFDRNQWAALRDSVPMTLSEDEIARLKGINEDLSLEEVAEIYLPLSRLLNFYISSNLRRQAVLEQFLGTNGQRIPYIISIAGSVAVGKSTTARVLQALLSRWPEHRRVELITTDGFLHPNQVLKERGLMKKKGFPESYDMHRLVKFVSDLKSGVPNVTAPVYSHLIYDVIPDGDKTVVQPDILILEGLNVLQSGMDYPHDPHHVFVSDFVDFSIYVDAPEDLLQTWYINRFLKFREGAFTDPDSYFHNYAKLTKEEAIKTAMTLWKEINWLNLKQNILPTRERASLILTKSANHAVEEVRLRK</sequence>
<name>COAA_ECO27</name>
<gene>
    <name evidence="1" type="primary">coaA</name>
    <name type="ordered locus">E2348C_4286</name>
</gene>
<keyword id="KW-0067">ATP-binding</keyword>
<keyword id="KW-0173">Coenzyme A biosynthesis</keyword>
<keyword id="KW-0963">Cytoplasm</keyword>
<keyword id="KW-0418">Kinase</keyword>
<keyword id="KW-0547">Nucleotide-binding</keyword>
<keyword id="KW-1185">Reference proteome</keyword>
<keyword id="KW-0808">Transferase</keyword>
<protein>
    <recommendedName>
        <fullName evidence="1">Pantothenate kinase</fullName>
        <ecNumber evidence="1">2.7.1.33</ecNumber>
    </recommendedName>
    <alternativeName>
        <fullName evidence="1">Pantothenic acid kinase</fullName>
    </alternativeName>
</protein>
<evidence type="ECO:0000255" key="1">
    <source>
        <dbReference type="HAMAP-Rule" id="MF_00215"/>
    </source>
</evidence>
<feature type="chain" id="PRO_1000124797" description="Pantothenate kinase">
    <location>
        <begin position="1"/>
        <end position="316"/>
    </location>
</feature>
<feature type="binding site" evidence="1">
    <location>
        <begin position="95"/>
        <end position="102"/>
    </location>
    <ligand>
        <name>ATP</name>
        <dbReference type="ChEBI" id="CHEBI:30616"/>
    </ligand>
</feature>
<reference key="1">
    <citation type="journal article" date="2009" name="J. Bacteriol.">
        <title>Complete genome sequence and comparative genome analysis of enteropathogenic Escherichia coli O127:H6 strain E2348/69.</title>
        <authorList>
            <person name="Iguchi A."/>
            <person name="Thomson N.R."/>
            <person name="Ogura Y."/>
            <person name="Saunders D."/>
            <person name="Ooka T."/>
            <person name="Henderson I.R."/>
            <person name="Harris D."/>
            <person name="Asadulghani M."/>
            <person name="Kurokawa K."/>
            <person name="Dean P."/>
            <person name="Kenny B."/>
            <person name="Quail M.A."/>
            <person name="Thurston S."/>
            <person name="Dougan G."/>
            <person name="Hayashi T."/>
            <person name="Parkhill J."/>
            <person name="Frankel G."/>
        </authorList>
    </citation>
    <scope>NUCLEOTIDE SEQUENCE [LARGE SCALE GENOMIC DNA]</scope>
    <source>
        <strain>E2348/69 / EPEC</strain>
    </source>
</reference>
<accession>B7UNV0</accession>
<organism>
    <name type="scientific">Escherichia coli O127:H6 (strain E2348/69 / EPEC)</name>
    <dbReference type="NCBI Taxonomy" id="574521"/>
    <lineage>
        <taxon>Bacteria</taxon>
        <taxon>Pseudomonadati</taxon>
        <taxon>Pseudomonadota</taxon>
        <taxon>Gammaproteobacteria</taxon>
        <taxon>Enterobacterales</taxon>
        <taxon>Enterobacteriaceae</taxon>
        <taxon>Escherichia</taxon>
    </lineage>
</organism>